<evidence type="ECO:0000250" key="1">
    <source>
        <dbReference type="UniProtKB" id="Q9TU17"/>
    </source>
</evidence>
<evidence type="ECO:0000256" key="2">
    <source>
        <dbReference type="SAM" id="MobiDB-lite"/>
    </source>
</evidence>
<evidence type="ECO:0000269" key="3">
    <source>
    </source>
</evidence>
<evidence type="ECO:0000269" key="4">
    <source>
    </source>
</evidence>
<evidence type="ECO:0000305" key="5"/>
<name>CXA3_CHICK</name>
<protein>
    <recommendedName>
        <fullName>Gap junction alpha-3 protein</fullName>
    </recommendedName>
    <alternativeName>
        <fullName>Connexin-56</fullName>
        <shortName>Cx56</shortName>
    </alternativeName>
</protein>
<proteinExistence type="evidence at protein level"/>
<accession>P29415</accession>
<reference key="1">
    <citation type="journal article" date="1993" name="J. Biol. Chem.">
        <title>Chick connexin-56, a novel lens gap junction protein. Molecular cloning and functional expression.</title>
        <authorList>
            <person name="Rup D.M."/>
            <person name="Veenstra R.D."/>
            <person name="Wang H.Z."/>
            <person name="Brink P.R."/>
            <person name="Beyer E.C."/>
        </authorList>
    </citation>
    <scope>NUCLEOTIDE SEQUENCE [GENOMIC DNA]</scope>
    <scope>FUNCTION</scope>
    <scope>TISSUE SPECIFICITY</scope>
</reference>
<reference key="2">
    <citation type="submission" date="2001-12" db="EMBL/GenBank/DDBJ databases">
        <authorList>
            <person name="Beyer E.C."/>
            <person name="Berthoud V.M."/>
        </authorList>
    </citation>
    <scope>SEQUENCE REVISION TO 365-366; 369; 383-385 AND 389</scope>
</reference>
<reference key="3">
    <citation type="journal article" date="2004" name="J. Cell Sci.">
        <title>Interaction of major intrinsic protein (aquaporin-0) with fiber connexins in lens development.</title>
        <authorList>
            <person name="Yu X.S."/>
            <person name="Jiang J.X."/>
        </authorList>
    </citation>
    <scope>INTERACTION WITH MIP</scope>
</reference>
<dbReference type="EMBL" id="L02838">
    <property type="protein sequence ID" value="AAA48737.2"/>
    <property type="molecule type" value="Genomic_DNA"/>
</dbReference>
<dbReference type="PIR" id="A45338">
    <property type="entry name" value="A45338"/>
</dbReference>
<dbReference type="RefSeq" id="NP_001035734.1">
    <property type="nucleotide sequence ID" value="NM_001040644.2"/>
</dbReference>
<dbReference type="RefSeq" id="NP_001385019.1">
    <property type="nucleotide sequence ID" value="NM_001398090.1"/>
</dbReference>
<dbReference type="RefSeq" id="XP_015133694.1">
    <property type="nucleotide sequence ID" value="XM_015278208.1"/>
</dbReference>
<dbReference type="RefSeq" id="XP_015133700.1">
    <property type="nucleotide sequence ID" value="XM_015278214.1"/>
</dbReference>
<dbReference type="SMR" id="P29415"/>
<dbReference type="FunCoup" id="P29415">
    <property type="interactions" value="5"/>
</dbReference>
<dbReference type="STRING" id="9031.ENSGALP00000027629"/>
<dbReference type="GlyGen" id="P29415">
    <property type="glycosylation" value="5 sites"/>
</dbReference>
<dbReference type="iPTMnet" id="P29415"/>
<dbReference type="PaxDb" id="9031-ENSGALP00000027629"/>
<dbReference type="Ensembl" id="ENSGALT00010013560.1">
    <property type="protein sequence ID" value="ENSGALP00010008042.1"/>
    <property type="gene ID" value="ENSGALG00010005675.1"/>
</dbReference>
<dbReference type="Ensembl" id="ENSGALT00010013564.1">
    <property type="protein sequence ID" value="ENSGALP00010008045.1"/>
    <property type="gene ID" value="ENSGALG00010005675.1"/>
</dbReference>
<dbReference type="Ensembl" id="ENSGALT00010013567.1">
    <property type="protein sequence ID" value="ENSGALP00010008047.1"/>
    <property type="gene ID" value="ENSGALG00010005675.1"/>
</dbReference>
<dbReference type="GeneID" id="428084"/>
<dbReference type="KEGG" id="gga:428084"/>
<dbReference type="CTD" id="2700"/>
<dbReference type="VEuPathDB" id="HostDB:geneid_428084"/>
<dbReference type="eggNOG" id="ENOG502QUKJ">
    <property type="taxonomic scope" value="Eukaryota"/>
</dbReference>
<dbReference type="GeneTree" id="ENSGT01050000244864"/>
<dbReference type="HOGENOM" id="CLU_037388_0_2_1"/>
<dbReference type="InParanoid" id="P29415"/>
<dbReference type="OMA" id="HILMTEQ"/>
<dbReference type="OrthoDB" id="8900325at2759"/>
<dbReference type="PhylomeDB" id="P29415"/>
<dbReference type="TreeFam" id="TF329606"/>
<dbReference type="Reactome" id="R-GGA-190861">
    <property type="pathway name" value="Gap junction assembly"/>
</dbReference>
<dbReference type="PRO" id="PR:P29415"/>
<dbReference type="Proteomes" id="UP000000539">
    <property type="component" value="Chromosome 1"/>
</dbReference>
<dbReference type="Bgee" id="ENSGALG00000017137">
    <property type="expression patterns" value="Expressed in spleen and 2 other cell types or tissues"/>
</dbReference>
<dbReference type="GO" id="GO:0005922">
    <property type="term" value="C:connexin complex"/>
    <property type="evidence" value="ECO:0000250"/>
    <property type="project" value="UniProtKB"/>
</dbReference>
<dbReference type="GO" id="GO:0005886">
    <property type="term" value="C:plasma membrane"/>
    <property type="evidence" value="ECO:0000250"/>
    <property type="project" value="UniProtKB"/>
</dbReference>
<dbReference type="GO" id="GO:0005243">
    <property type="term" value="F:gap junction channel activity"/>
    <property type="evidence" value="ECO:0000318"/>
    <property type="project" value="GO_Central"/>
</dbReference>
<dbReference type="GO" id="GO:0055077">
    <property type="term" value="F:gap junction hemi-channel activity"/>
    <property type="evidence" value="ECO:0000250"/>
    <property type="project" value="UniProtKB"/>
</dbReference>
<dbReference type="GO" id="GO:0007267">
    <property type="term" value="P:cell-cell signaling"/>
    <property type="evidence" value="ECO:0000318"/>
    <property type="project" value="GO_Central"/>
</dbReference>
<dbReference type="GO" id="GO:1990349">
    <property type="term" value="P:gap junction-mediated intercellular transport"/>
    <property type="evidence" value="ECO:0000250"/>
    <property type="project" value="UniProtKB"/>
</dbReference>
<dbReference type="FunFam" id="1.20.1440.80:FF:000002">
    <property type="entry name" value="Gap junction protein"/>
    <property type="match status" value="1"/>
</dbReference>
<dbReference type="Gene3D" id="1.20.1440.80">
    <property type="entry name" value="Gap junction channel protein cysteine-rich domain"/>
    <property type="match status" value="1"/>
</dbReference>
<dbReference type="InterPro" id="IPR000500">
    <property type="entry name" value="Connexin"/>
</dbReference>
<dbReference type="InterPro" id="IPR034634">
    <property type="entry name" value="Connexin_C"/>
</dbReference>
<dbReference type="InterPro" id="IPR019570">
    <property type="entry name" value="Connexin_CCC"/>
</dbReference>
<dbReference type="InterPro" id="IPR017990">
    <property type="entry name" value="Connexin_CS"/>
</dbReference>
<dbReference type="InterPro" id="IPR013092">
    <property type="entry name" value="Connexin_N"/>
</dbReference>
<dbReference type="InterPro" id="IPR038359">
    <property type="entry name" value="Connexin_N_sf"/>
</dbReference>
<dbReference type="PANTHER" id="PTHR11984">
    <property type="entry name" value="CONNEXIN"/>
    <property type="match status" value="1"/>
</dbReference>
<dbReference type="PANTHER" id="PTHR11984:SF12">
    <property type="entry name" value="GAP JUNCTION ALPHA-3 PROTEIN"/>
    <property type="match status" value="1"/>
</dbReference>
<dbReference type="Pfam" id="PF00029">
    <property type="entry name" value="Connexin"/>
    <property type="match status" value="1"/>
</dbReference>
<dbReference type="PRINTS" id="PR00206">
    <property type="entry name" value="CONNEXIN"/>
</dbReference>
<dbReference type="SMART" id="SM00037">
    <property type="entry name" value="CNX"/>
    <property type="match status" value="1"/>
</dbReference>
<dbReference type="SMART" id="SM01089">
    <property type="entry name" value="Connexin_CCC"/>
    <property type="match status" value="1"/>
</dbReference>
<dbReference type="SUPFAM" id="SSF118220">
    <property type="entry name" value="Connexin43"/>
    <property type="match status" value="1"/>
</dbReference>
<dbReference type="PROSITE" id="PS00407">
    <property type="entry name" value="CONNEXINS_1"/>
    <property type="match status" value="1"/>
</dbReference>
<dbReference type="PROSITE" id="PS00408">
    <property type="entry name" value="CONNEXINS_2"/>
    <property type="match status" value="1"/>
</dbReference>
<gene>
    <name type="primary">GJA3</name>
</gene>
<keyword id="KW-0965">Cell junction</keyword>
<keyword id="KW-1003">Cell membrane</keyword>
<keyword id="KW-1015">Disulfide bond</keyword>
<keyword id="KW-0303">Gap junction</keyword>
<keyword id="KW-0472">Membrane</keyword>
<keyword id="KW-1185">Reference proteome</keyword>
<keyword id="KW-0812">Transmembrane</keyword>
<keyword id="KW-1133">Transmembrane helix</keyword>
<feature type="initiator methionine" description="Removed" evidence="1">
    <location>
        <position position="1"/>
    </location>
</feature>
<feature type="chain" id="PRO_0000057878" description="Gap junction alpha-3 protein">
    <location>
        <begin position="2"/>
        <end position="511"/>
    </location>
</feature>
<feature type="intramembrane region" evidence="1">
    <location>
        <begin position="2"/>
        <end position="15"/>
    </location>
</feature>
<feature type="topological domain" description="Cytoplasmic" evidence="5">
    <location>
        <begin position="16"/>
        <end position="19"/>
    </location>
</feature>
<feature type="transmembrane region" description="Helical" evidence="1">
    <location>
        <begin position="20"/>
        <end position="40"/>
    </location>
</feature>
<feature type="topological domain" description="Extracellular" evidence="5">
    <location>
        <begin position="41"/>
        <end position="71"/>
    </location>
</feature>
<feature type="transmembrane region" description="Helical" evidence="1">
    <location>
        <begin position="72"/>
        <end position="92"/>
    </location>
</feature>
<feature type="topological domain" description="Cytoplasmic" evidence="5">
    <location>
        <begin position="93"/>
        <end position="174"/>
    </location>
</feature>
<feature type="transmembrane region" description="Helical" evidence="1">
    <location>
        <begin position="175"/>
        <end position="195"/>
    </location>
</feature>
<feature type="topological domain" description="Extracellular" evidence="5">
    <location>
        <begin position="196"/>
        <end position="223"/>
    </location>
</feature>
<feature type="transmembrane region" description="Helical" evidence="1">
    <location>
        <begin position="224"/>
        <end position="244"/>
    </location>
</feature>
<feature type="topological domain" description="Cytoplasmic" evidence="5">
    <location>
        <begin position="245"/>
        <end position="511"/>
    </location>
</feature>
<feature type="region of interest" description="Disordered" evidence="2">
    <location>
        <begin position="110"/>
        <end position="143"/>
    </location>
</feature>
<feature type="region of interest" description="Disordered" evidence="2">
    <location>
        <begin position="397"/>
        <end position="511"/>
    </location>
</feature>
<feature type="compositionally biased region" description="Basic and acidic residues" evidence="2">
    <location>
        <begin position="110"/>
        <end position="119"/>
    </location>
</feature>
<feature type="compositionally biased region" description="Gly residues" evidence="2">
    <location>
        <begin position="129"/>
        <end position="138"/>
    </location>
</feature>
<feature type="compositionally biased region" description="Low complexity" evidence="2">
    <location>
        <begin position="403"/>
        <end position="415"/>
    </location>
</feature>
<feature type="compositionally biased region" description="Low complexity" evidence="2">
    <location>
        <begin position="440"/>
        <end position="456"/>
    </location>
</feature>
<feature type="disulfide bond" evidence="1">
    <location>
        <begin position="54"/>
        <end position="214"/>
    </location>
</feature>
<feature type="disulfide bond" evidence="1">
    <location>
        <begin position="61"/>
        <end position="208"/>
    </location>
</feature>
<feature type="disulfide bond" evidence="1">
    <location>
        <begin position="65"/>
        <end position="203"/>
    </location>
</feature>
<organism>
    <name type="scientific">Gallus gallus</name>
    <name type="common">Chicken</name>
    <dbReference type="NCBI Taxonomy" id="9031"/>
    <lineage>
        <taxon>Eukaryota</taxon>
        <taxon>Metazoa</taxon>
        <taxon>Chordata</taxon>
        <taxon>Craniata</taxon>
        <taxon>Vertebrata</taxon>
        <taxon>Euteleostomi</taxon>
        <taxon>Archelosauria</taxon>
        <taxon>Archosauria</taxon>
        <taxon>Dinosauria</taxon>
        <taxon>Saurischia</taxon>
        <taxon>Theropoda</taxon>
        <taxon>Coelurosauria</taxon>
        <taxon>Aves</taxon>
        <taxon>Neognathae</taxon>
        <taxon>Galloanserae</taxon>
        <taxon>Galliformes</taxon>
        <taxon>Phasianidae</taxon>
        <taxon>Phasianinae</taxon>
        <taxon>Gallus</taxon>
    </lineage>
</organism>
<sequence length="511" mass="55793">MGDWSFLGRLLENAQEHSTVIGKVWLTVLFIFRILVLGAAAEEVWGDEQSDFTCNTQQPGCENVCYDKAFPISHIRFWVLQIIFVSTPTLIYLGHVLHIVRMEEKRKEKEEELKKRGSVKDNNYPGAATSGGGSGGGNNFKDPPIKMGKEKLPIRDERGRIRMGGALLRTYIFNIIFKTLFEVGFIVGQYFLYGFELKPVYQCSRPPCPHTVDCFISRPTEKTIFIIFMLVVASVSLLLNMLEIYHLGWKKLKQGMTSQYSLEMPVTTLTPVMVTGESKPVSLPPPAPPVVVTTTAPAPVLPDTRAVTPLLAPVTMAPYYAAAAPRTRPPSNTASMASYPVAPPVPENRHRAVTPTPVSTPVTIPTPIPTPTPAIINYFNSKSNALAAEQNWVNMAAEQQGKAPSSSAGSSTPSSVRHPLPEQEEPLEQLLPLPAGPPITTTNSGSSTSLSGASGSKWDVEGEEELAEERPISATCTTVEMHEPPLLVDTRRLSRASKSSSSRARSDDLAV</sequence>
<comment type="function">
    <text evidence="1 4">Structural component of lens fiber gap junctions (PubMed:7678009). Gap junctions are dodecameric channels that connect the cytoplasm of adjoining cells. They are formed by the docking of two hexameric hemichannels, one from each cell membrane (By similarity). Small molecules and ions diffuse from one cell to a neighboring cell via the central pore (PubMed:7678009).</text>
</comment>
<comment type="subunit">
    <text evidence="1 3">A hemichannel or connexon is composed of a hexamer of connexins. A functional gap junction is formed by the apposition of two hemichannels (By similarity). During early stages of lens development, interacts with the C-terminus of MIP (PubMed:14762116).</text>
</comment>
<comment type="subcellular location">
    <subcellularLocation>
        <location evidence="1">Cell membrane</location>
        <topology evidence="1">Multi-pass membrane protein</topology>
    </subcellularLocation>
    <subcellularLocation>
        <location evidence="1">Cell junction</location>
        <location evidence="1">Gap junction</location>
    </subcellularLocation>
</comment>
<comment type="tissue specificity">
    <text evidence="4">Detected in eye lens.</text>
</comment>
<comment type="similarity">
    <text evidence="5">Belongs to the connexin family.</text>
</comment>